<proteinExistence type="evidence at protein level"/>
<comment type="function">
    <text evidence="1">Involved in the gluconeogenesis. Catalyzes stereospecifically the conversion of dihydroxyacetone phosphate (DHAP) to D-glyceraldehyde-3-phosphate (G3P).</text>
</comment>
<comment type="catalytic activity">
    <reaction evidence="1">
        <text>D-glyceraldehyde 3-phosphate = dihydroxyacetone phosphate</text>
        <dbReference type="Rhea" id="RHEA:18585"/>
        <dbReference type="ChEBI" id="CHEBI:57642"/>
        <dbReference type="ChEBI" id="CHEBI:59776"/>
        <dbReference type="EC" id="5.3.1.1"/>
    </reaction>
</comment>
<comment type="pathway">
    <text evidence="1">Carbohydrate biosynthesis; gluconeogenesis.</text>
</comment>
<comment type="pathway">
    <text evidence="1">Carbohydrate degradation; glycolysis; D-glyceraldehyde 3-phosphate from glycerone phosphate: step 1/1.</text>
</comment>
<comment type="subunit">
    <text evidence="1 2">Homodimer.</text>
</comment>
<comment type="subcellular location">
    <subcellularLocation>
        <location evidence="1">Cytoplasm</location>
    </subcellularLocation>
</comment>
<comment type="similarity">
    <text evidence="1">Belongs to the triosephosphate isomerase family.</text>
</comment>
<keyword id="KW-0002">3D-structure</keyword>
<keyword id="KW-0963">Cytoplasm</keyword>
<keyword id="KW-0312">Gluconeogenesis</keyword>
<keyword id="KW-0324">Glycolysis</keyword>
<keyword id="KW-0413">Isomerase</keyword>
<accession>Q8L1Z5</accession>
<feature type="chain" id="PRO_0000090181" description="Triosephosphate isomerase">
    <location>
        <begin position="1"/>
        <end position="254"/>
    </location>
</feature>
<feature type="active site" description="Electrophile" evidence="1">
    <location>
        <position position="99"/>
    </location>
</feature>
<feature type="active site" description="Proton acceptor" evidence="1">
    <location>
        <position position="169"/>
    </location>
</feature>
<feature type="binding site" evidence="1">
    <location>
        <begin position="12"/>
        <end position="14"/>
    </location>
    <ligand>
        <name>substrate</name>
    </ligand>
</feature>
<feature type="binding site" evidence="1">
    <location>
        <position position="175"/>
    </location>
    <ligand>
        <name>substrate</name>
    </ligand>
</feature>
<feature type="binding site" evidence="1">
    <location>
        <position position="214"/>
    </location>
    <ligand>
        <name>substrate</name>
    </ligand>
</feature>
<feature type="binding site" evidence="1">
    <location>
        <begin position="235"/>
        <end position="236"/>
    </location>
    <ligand>
        <name>substrate</name>
    </ligand>
</feature>
<feature type="strand" evidence="3">
    <location>
        <begin position="8"/>
        <end position="12"/>
    </location>
</feature>
<feature type="helix" evidence="3">
    <location>
        <begin position="19"/>
        <end position="21"/>
    </location>
</feature>
<feature type="helix" evidence="3">
    <location>
        <begin position="22"/>
        <end position="32"/>
    </location>
</feature>
<feature type="strand" evidence="3">
    <location>
        <begin position="40"/>
        <end position="45"/>
    </location>
</feature>
<feature type="turn" evidence="3">
    <location>
        <begin position="48"/>
        <end position="50"/>
    </location>
</feature>
<feature type="helix" evidence="3">
    <location>
        <begin position="51"/>
        <end position="58"/>
    </location>
</feature>
<feature type="strand" evidence="3">
    <location>
        <begin position="61"/>
        <end position="68"/>
    </location>
</feature>
<feature type="strand" evidence="3">
    <location>
        <begin position="72"/>
        <end position="77"/>
    </location>
</feature>
<feature type="helix" evidence="3">
    <location>
        <begin position="84"/>
        <end position="90"/>
    </location>
</feature>
<feature type="strand" evidence="3">
    <location>
        <begin position="93"/>
        <end position="98"/>
    </location>
</feature>
<feature type="helix" evidence="3">
    <location>
        <begin position="100"/>
        <end position="105"/>
    </location>
</feature>
<feature type="helix" evidence="3">
    <location>
        <begin position="110"/>
        <end position="122"/>
    </location>
</feature>
<feature type="strand" evidence="3">
    <location>
        <begin position="126"/>
        <end position="131"/>
    </location>
</feature>
<feature type="helix" evidence="3">
    <location>
        <begin position="135"/>
        <end position="139"/>
    </location>
</feature>
<feature type="helix" evidence="3">
    <location>
        <begin position="143"/>
        <end position="154"/>
    </location>
</feature>
<feature type="turn" evidence="3">
    <location>
        <begin position="161"/>
        <end position="163"/>
    </location>
</feature>
<feature type="strand" evidence="3">
    <location>
        <begin position="164"/>
        <end position="168"/>
    </location>
</feature>
<feature type="helix" evidence="3">
    <location>
        <begin position="182"/>
        <end position="204"/>
    </location>
</feature>
<feature type="strand" evidence="3">
    <location>
        <begin position="209"/>
        <end position="211"/>
    </location>
</feature>
<feature type="turn" evidence="3">
    <location>
        <begin position="217"/>
        <end position="219"/>
    </location>
</feature>
<feature type="helix" evidence="3">
    <location>
        <begin position="220"/>
        <end position="224"/>
    </location>
</feature>
<feature type="strand" evidence="3">
    <location>
        <begin position="231"/>
        <end position="235"/>
    </location>
</feature>
<feature type="helix" evidence="3">
    <location>
        <begin position="236"/>
        <end position="238"/>
    </location>
</feature>
<feature type="helix" evidence="3">
    <location>
        <begin position="241"/>
        <end position="248"/>
    </location>
</feature>
<feature type="helix" evidence="3">
    <location>
        <begin position="249"/>
        <end position="252"/>
    </location>
</feature>
<name>TPIS_BARHE</name>
<organism>
    <name type="scientific">Bartonella henselae (strain ATCC 49882 / DSM 28221 / CCUG 30454 / Houston 1)</name>
    <name type="common">Rochalimaea henselae</name>
    <dbReference type="NCBI Taxonomy" id="283166"/>
    <lineage>
        <taxon>Bacteria</taxon>
        <taxon>Pseudomonadati</taxon>
        <taxon>Pseudomonadota</taxon>
        <taxon>Alphaproteobacteria</taxon>
        <taxon>Hyphomicrobiales</taxon>
        <taxon>Bartonellaceae</taxon>
        <taxon>Bartonella</taxon>
    </lineage>
</organism>
<dbReference type="EC" id="5.3.1.1" evidence="1"/>
<dbReference type="EMBL" id="AY074775">
    <property type="protein sequence ID" value="AAL74288.1"/>
    <property type="molecule type" value="Genomic_DNA"/>
</dbReference>
<dbReference type="EMBL" id="BX897699">
    <property type="protein sequence ID" value="CAF27376.1"/>
    <property type="molecule type" value="Genomic_DNA"/>
</dbReference>
<dbReference type="RefSeq" id="WP_011180497.1">
    <property type="nucleotide sequence ID" value="NZ_LRIJ02000001.1"/>
</dbReference>
<dbReference type="PDB" id="3KXQ">
    <property type="method" value="X-ray"/>
    <property type="resolution" value="1.60 A"/>
    <property type="chains" value="A/B=1-254"/>
</dbReference>
<dbReference type="PDBsum" id="3KXQ"/>
<dbReference type="SMR" id="Q8L1Z5"/>
<dbReference type="PaxDb" id="283166-BH05680"/>
<dbReference type="EnsemblBacteria" id="CAF27376">
    <property type="protein sequence ID" value="CAF27376"/>
    <property type="gene ID" value="BH05680"/>
</dbReference>
<dbReference type="GeneID" id="92985227"/>
<dbReference type="KEGG" id="bhe:BH05680"/>
<dbReference type="eggNOG" id="COG0149">
    <property type="taxonomic scope" value="Bacteria"/>
</dbReference>
<dbReference type="OrthoDB" id="9809429at2"/>
<dbReference type="BRENDA" id="5.3.1.1">
    <property type="organism ID" value="7854"/>
</dbReference>
<dbReference type="UniPathway" id="UPA00109">
    <property type="reaction ID" value="UER00189"/>
</dbReference>
<dbReference type="UniPathway" id="UPA00138"/>
<dbReference type="EvolutionaryTrace" id="Q8L1Z5"/>
<dbReference type="Proteomes" id="UP000000421">
    <property type="component" value="Chromosome"/>
</dbReference>
<dbReference type="GO" id="GO:0005829">
    <property type="term" value="C:cytosol"/>
    <property type="evidence" value="ECO:0007669"/>
    <property type="project" value="TreeGrafter"/>
</dbReference>
<dbReference type="GO" id="GO:0004807">
    <property type="term" value="F:triose-phosphate isomerase activity"/>
    <property type="evidence" value="ECO:0007669"/>
    <property type="project" value="UniProtKB-UniRule"/>
</dbReference>
<dbReference type="GO" id="GO:0006094">
    <property type="term" value="P:gluconeogenesis"/>
    <property type="evidence" value="ECO:0007669"/>
    <property type="project" value="UniProtKB-UniRule"/>
</dbReference>
<dbReference type="GO" id="GO:0046166">
    <property type="term" value="P:glyceraldehyde-3-phosphate biosynthetic process"/>
    <property type="evidence" value="ECO:0007669"/>
    <property type="project" value="TreeGrafter"/>
</dbReference>
<dbReference type="GO" id="GO:0019563">
    <property type="term" value="P:glycerol catabolic process"/>
    <property type="evidence" value="ECO:0007669"/>
    <property type="project" value="TreeGrafter"/>
</dbReference>
<dbReference type="GO" id="GO:0006096">
    <property type="term" value="P:glycolytic process"/>
    <property type="evidence" value="ECO:0007669"/>
    <property type="project" value="UniProtKB-UniRule"/>
</dbReference>
<dbReference type="CDD" id="cd00311">
    <property type="entry name" value="TIM"/>
    <property type="match status" value="1"/>
</dbReference>
<dbReference type="FunFam" id="3.20.20.70:FF:000016">
    <property type="entry name" value="Triosephosphate isomerase"/>
    <property type="match status" value="1"/>
</dbReference>
<dbReference type="Gene3D" id="3.20.20.70">
    <property type="entry name" value="Aldolase class I"/>
    <property type="match status" value="1"/>
</dbReference>
<dbReference type="HAMAP" id="MF_00147_B">
    <property type="entry name" value="TIM_B"/>
    <property type="match status" value="1"/>
</dbReference>
<dbReference type="InterPro" id="IPR013785">
    <property type="entry name" value="Aldolase_TIM"/>
</dbReference>
<dbReference type="InterPro" id="IPR035990">
    <property type="entry name" value="TIM_sf"/>
</dbReference>
<dbReference type="InterPro" id="IPR022896">
    <property type="entry name" value="TrioseP_Isoase_bac/euk"/>
</dbReference>
<dbReference type="InterPro" id="IPR000652">
    <property type="entry name" value="Triosephosphate_isomerase"/>
</dbReference>
<dbReference type="InterPro" id="IPR020861">
    <property type="entry name" value="Triosephosphate_isomerase_AS"/>
</dbReference>
<dbReference type="NCBIfam" id="TIGR00419">
    <property type="entry name" value="tim"/>
    <property type="match status" value="1"/>
</dbReference>
<dbReference type="PANTHER" id="PTHR21139">
    <property type="entry name" value="TRIOSEPHOSPHATE ISOMERASE"/>
    <property type="match status" value="1"/>
</dbReference>
<dbReference type="PANTHER" id="PTHR21139:SF42">
    <property type="entry name" value="TRIOSEPHOSPHATE ISOMERASE"/>
    <property type="match status" value="1"/>
</dbReference>
<dbReference type="Pfam" id="PF00121">
    <property type="entry name" value="TIM"/>
    <property type="match status" value="1"/>
</dbReference>
<dbReference type="SUPFAM" id="SSF51351">
    <property type="entry name" value="Triosephosphate isomerase (TIM)"/>
    <property type="match status" value="1"/>
</dbReference>
<dbReference type="PROSITE" id="PS00171">
    <property type="entry name" value="TIM_1"/>
    <property type="match status" value="1"/>
</dbReference>
<dbReference type="PROSITE" id="PS51440">
    <property type="entry name" value="TIM_2"/>
    <property type="match status" value="1"/>
</dbReference>
<reference key="1">
    <citation type="journal article" date="2002" name="Proc. Natl. Acad. Sci. U.S.A.">
        <title>The global phylogeny of glycolytic enzymes.</title>
        <authorList>
            <person name="Canback B."/>
            <person name="Andersson S.G.E."/>
            <person name="Kurland C.G."/>
        </authorList>
    </citation>
    <scope>NUCLEOTIDE SEQUENCE [GENOMIC DNA]</scope>
    <source>
        <strain>ATCC 49882 / DSM 28221 / CCUG 30454 / Houston 1</strain>
    </source>
</reference>
<reference key="2">
    <citation type="journal article" date="2004" name="Proc. Natl. Acad. Sci. U.S.A.">
        <title>The louse-borne human pathogen Bartonella quintana is a genomic derivative of the zoonotic agent Bartonella henselae.</title>
        <authorList>
            <person name="Alsmark U.C.M."/>
            <person name="Frank A.C."/>
            <person name="Karlberg E.O."/>
            <person name="Legault B.-A."/>
            <person name="Ardell D.H."/>
            <person name="Canbaeck B."/>
            <person name="Eriksson A.-S."/>
            <person name="Naeslund A.K."/>
            <person name="Handley S.A."/>
            <person name="Huvet M."/>
            <person name="La Scola B."/>
            <person name="Holmberg M."/>
            <person name="Andersson S.G.E."/>
        </authorList>
    </citation>
    <scope>NUCLEOTIDE SEQUENCE [LARGE SCALE GENOMIC DNA]</scope>
    <source>
        <strain>ATCC 49882 / DSM 28221 / CCUG 30454 / Houston 1</strain>
    </source>
</reference>
<reference key="3">
    <citation type="submission" date="2009-12" db="PDB data bank">
        <title>Crystal structure of triosephosphate isomerase from Bartonella henselae at 1.6A resolution.</title>
        <authorList>
            <person name="Abendroth J."/>
            <person name="Edwards T.E."/>
            <person name="Staker B."/>
        </authorList>
    </citation>
    <scope>X-RAY CRYSTALLOGRAPHY (1.60 ANGSTROMS)</scope>
    <scope>SUBUNIT</scope>
</reference>
<sequence>MSPNIRPFIAGNWKMNGTGESLGELRAIAAGISSDLGRLFEALICVPATLLSRAFDILGGENILLGGQNCHFDDYGPYTGDISAFMLKEAGASHVIIGHSERRTVYQESDAIVRAKVQAAWRAGLVALICVGETLEERKSNKVLDVLTRQLEGSLPDGATAENIIIAYEPVWAVGTGNTATSADVAEVHAFIHHKMHSRFGDEGAKIRLLYGGSVKPSNAFELLSTAHVNGALIGGASLKAIDFLTICDVYRKL</sequence>
<gene>
    <name evidence="1" type="primary">tpiA</name>
    <name type="ordered locus">BH05680</name>
</gene>
<evidence type="ECO:0000255" key="1">
    <source>
        <dbReference type="HAMAP-Rule" id="MF_00147"/>
    </source>
</evidence>
<evidence type="ECO:0000269" key="2">
    <source ref="3"/>
</evidence>
<evidence type="ECO:0007829" key="3">
    <source>
        <dbReference type="PDB" id="3KXQ"/>
    </source>
</evidence>
<protein>
    <recommendedName>
        <fullName evidence="1">Triosephosphate isomerase</fullName>
        <shortName evidence="1">TIM</shortName>
        <shortName evidence="1">TPI</shortName>
        <ecNumber evidence="1">5.3.1.1</ecNumber>
    </recommendedName>
    <alternativeName>
        <fullName evidence="1">Triose-phosphate isomerase</fullName>
    </alternativeName>
</protein>